<dbReference type="EC" id="2.4.1.227" evidence="1"/>
<dbReference type="EMBL" id="BA000034">
    <property type="protein sequence ID" value="BAC63782.1"/>
    <property type="molecule type" value="Genomic_DNA"/>
</dbReference>
<dbReference type="RefSeq" id="WP_032461317.1">
    <property type="nucleotide sequence ID" value="NC_004606.1"/>
</dbReference>
<dbReference type="SMR" id="P0DC57"/>
<dbReference type="CAZy" id="GT28">
    <property type="family name" value="Glycosyltransferase Family 28"/>
</dbReference>
<dbReference type="KEGG" id="sps:SPs0687"/>
<dbReference type="HOGENOM" id="CLU_037404_0_0_9"/>
<dbReference type="UniPathway" id="UPA00219"/>
<dbReference type="GO" id="GO:0005886">
    <property type="term" value="C:plasma membrane"/>
    <property type="evidence" value="ECO:0007669"/>
    <property type="project" value="UniProtKB-SubCell"/>
</dbReference>
<dbReference type="GO" id="GO:0050511">
    <property type="term" value="F:undecaprenyldiphospho-muramoylpentapeptide beta-N-acetylglucosaminyltransferase activity"/>
    <property type="evidence" value="ECO:0007669"/>
    <property type="project" value="UniProtKB-UniRule"/>
</dbReference>
<dbReference type="GO" id="GO:0005975">
    <property type="term" value="P:carbohydrate metabolic process"/>
    <property type="evidence" value="ECO:0007669"/>
    <property type="project" value="InterPro"/>
</dbReference>
<dbReference type="GO" id="GO:0051301">
    <property type="term" value="P:cell division"/>
    <property type="evidence" value="ECO:0007669"/>
    <property type="project" value="UniProtKB-KW"/>
</dbReference>
<dbReference type="GO" id="GO:0071555">
    <property type="term" value="P:cell wall organization"/>
    <property type="evidence" value="ECO:0007669"/>
    <property type="project" value="UniProtKB-KW"/>
</dbReference>
<dbReference type="GO" id="GO:0030259">
    <property type="term" value="P:lipid glycosylation"/>
    <property type="evidence" value="ECO:0007669"/>
    <property type="project" value="UniProtKB-UniRule"/>
</dbReference>
<dbReference type="GO" id="GO:0009252">
    <property type="term" value="P:peptidoglycan biosynthetic process"/>
    <property type="evidence" value="ECO:0007669"/>
    <property type="project" value="UniProtKB-UniRule"/>
</dbReference>
<dbReference type="GO" id="GO:0008360">
    <property type="term" value="P:regulation of cell shape"/>
    <property type="evidence" value="ECO:0007669"/>
    <property type="project" value="UniProtKB-KW"/>
</dbReference>
<dbReference type="CDD" id="cd03785">
    <property type="entry name" value="GT28_MurG"/>
    <property type="match status" value="1"/>
</dbReference>
<dbReference type="Gene3D" id="3.40.50.2000">
    <property type="entry name" value="Glycogen Phosphorylase B"/>
    <property type="match status" value="2"/>
</dbReference>
<dbReference type="HAMAP" id="MF_00033">
    <property type="entry name" value="MurG"/>
    <property type="match status" value="1"/>
</dbReference>
<dbReference type="InterPro" id="IPR006009">
    <property type="entry name" value="GlcNAc_MurG"/>
</dbReference>
<dbReference type="InterPro" id="IPR007235">
    <property type="entry name" value="Glyco_trans_28_C"/>
</dbReference>
<dbReference type="InterPro" id="IPR004276">
    <property type="entry name" value="GlycoTrans_28_N"/>
</dbReference>
<dbReference type="PANTHER" id="PTHR21015:SF27">
    <property type="entry name" value="UDP-N-ACETYLGLUCOSAMINE--N-ACETYLMURAMYL-(PENTAPEPTIDE) PYROPHOSPHORYL-UNDECAPRENOL N-ACETYLGLUCOSAMINE TRANSFERASE"/>
    <property type="match status" value="1"/>
</dbReference>
<dbReference type="PANTHER" id="PTHR21015">
    <property type="entry name" value="UDP-N-ACETYLGLUCOSAMINE--N-ACETYLMURAMYL-(PENTAPEPTIDE) PYROPHOSPHORYL-UNDECAPRENOL N-ACETYLGLUCOSAMINE TRANSFERASE 1"/>
    <property type="match status" value="1"/>
</dbReference>
<dbReference type="Pfam" id="PF04101">
    <property type="entry name" value="Glyco_tran_28_C"/>
    <property type="match status" value="1"/>
</dbReference>
<dbReference type="Pfam" id="PF03033">
    <property type="entry name" value="Glyco_transf_28"/>
    <property type="match status" value="1"/>
</dbReference>
<dbReference type="SUPFAM" id="SSF53756">
    <property type="entry name" value="UDP-Glycosyltransferase/glycogen phosphorylase"/>
    <property type="match status" value="1"/>
</dbReference>
<keyword id="KW-0131">Cell cycle</keyword>
<keyword id="KW-0132">Cell division</keyword>
<keyword id="KW-1003">Cell membrane</keyword>
<keyword id="KW-0133">Cell shape</keyword>
<keyword id="KW-0961">Cell wall biogenesis/degradation</keyword>
<keyword id="KW-0328">Glycosyltransferase</keyword>
<keyword id="KW-0472">Membrane</keyword>
<keyword id="KW-0573">Peptidoglycan synthesis</keyword>
<keyword id="KW-0808">Transferase</keyword>
<feature type="chain" id="PRO_0000411416" description="UDP-N-acetylglucosamine--N-acetylmuramyl-(pentapeptide) pyrophosphoryl-undecaprenol N-acetylglucosamine transferase">
    <location>
        <begin position="1"/>
        <end position="360"/>
    </location>
</feature>
<feature type="binding site" evidence="1">
    <location>
        <position position="198"/>
    </location>
    <ligand>
        <name>UDP-N-acetyl-alpha-D-glucosamine</name>
        <dbReference type="ChEBI" id="CHEBI:57705"/>
    </ligand>
</feature>
<feature type="binding site" evidence="1">
    <location>
        <position position="289"/>
    </location>
    <ligand>
        <name>UDP-N-acetyl-alpha-D-glucosamine</name>
        <dbReference type="ChEBI" id="CHEBI:57705"/>
    </ligand>
</feature>
<accession>P0DC57</accession>
<accession>Q8K6R7</accession>
<name>MURG_STRPQ</name>
<gene>
    <name evidence="1" type="primary">murG</name>
    <name type="ordered locus">SPs0687</name>
</gene>
<organism>
    <name type="scientific">Streptococcus pyogenes serotype M3 (strain SSI-1)</name>
    <dbReference type="NCBI Taxonomy" id="193567"/>
    <lineage>
        <taxon>Bacteria</taxon>
        <taxon>Bacillati</taxon>
        <taxon>Bacillota</taxon>
        <taxon>Bacilli</taxon>
        <taxon>Lactobacillales</taxon>
        <taxon>Streptococcaceae</taxon>
        <taxon>Streptococcus</taxon>
    </lineage>
</organism>
<protein>
    <recommendedName>
        <fullName evidence="1">UDP-N-acetylglucosamine--N-acetylmuramyl-(pentapeptide) pyrophosphoryl-undecaprenol N-acetylglucosamine transferase</fullName>
        <ecNumber evidence="1">2.4.1.227</ecNumber>
    </recommendedName>
    <alternativeName>
        <fullName evidence="1">Undecaprenyl-PP-MurNAc-pentapeptide-UDPGlcNAc GlcNAc transferase</fullName>
    </alternativeName>
</protein>
<reference key="1">
    <citation type="journal article" date="2003" name="Genome Res.">
        <title>Genome sequence of an M3 strain of Streptococcus pyogenes reveals a large-scale genomic rearrangement in invasive strains and new insights into phage evolution.</title>
        <authorList>
            <person name="Nakagawa I."/>
            <person name="Kurokawa K."/>
            <person name="Yamashita A."/>
            <person name="Nakata M."/>
            <person name="Tomiyasu Y."/>
            <person name="Okahashi N."/>
            <person name="Kawabata S."/>
            <person name="Yamazaki K."/>
            <person name="Shiba T."/>
            <person name="Yasunaga T."/>
            <person name="Hayashi H."/>
            <person name="Hattori M."/>
            <person name="Hamada S."/>
        </authorList>
    </citation>
    <scope>NUCLEOTIDE SEQUENCE [LARGE SCALE GENOMIC DNA]</scope>
    <source>
        <strain>SSI-1</strain>
    </source>
</reference>
<evidence type="ECO:0000255" key="1">
    <source>
        <dbReference type="HAMAP-Rule" id="MF_00033"/>
    </source>
</evidence>
<comment type="function">
    <text evidence="1">Cell wall formation. Catalyzes the transfer of a GlcNAc subunit on undecaprenyl-pyrophosphoryl-MurNAc-pentapeptide (lipid intermediate I) to form undecaprenyl-pyrophosphoryl-MurNAc-(pentapeptide)GlcNAc (lipid intermediate II).</text>
</comment>
<comment type="catalytic activity">
    <reaction evidence="1">
        <text>Mur2Ac(oyl-L-Ala-gamma-D-Glu-L-Lys-D-Ala-D-Ala)-di-trans,octa-cis-undecaprenyl diphosphate + UDP-N-acetyl-alpha-D-glucosamine = beta-D-GlcNAc-(1-&gt;4)-Mur2Ac(oyl-L-Ala-gamma-D-Glu-L-Lys-D-Ala-D-Ala)-di-trans,octa-cis-undecaprenyl diphosphate + UDP + H(+)</text>
        <dbReference type="Rhea" id="RHEA:23192"/>
        <dbReference type="ChEBI" id="CHEBI:15378"/>
        <dbReference type="ChEBI" id="CHEBI:57705"/>
        <dbReference type="ChEBI" id="CHEBI:58223"/>
        <dbReference type="ChEBI" id="CHEBI:60032"/>
        <dbReference type="ChEBI" id="CHEBI:60033"/>
        <dbReference type="EC" id="2.4.1.227"/>
    </reaction>
</comment>
<comment type="pathway">
    <text evidence="1">Cell wall biogenesis; peptidoglycan biosynthesis.</text>
</comment>
<comment type="subcellular location">
    <subcellularLocation>
        <location evidence="1">Cell membrane</location>
        <topology evidence="1">Peripheral membrane protein</topology>
        <orientation evidence="1">Cytoplasmic side</orientation>
    </subcellularLocation>
</comment>
<comment type="similarity">
    <text evidence="1">Belongs to the glycosyltransferase 28 family. MurG subfamily.</text>
</comment>
<proteinExistence type="inferred from homology"/>
<sequence length="360" mass="40414">MPKKILFTGGGTVGHVTLNLILIPKFIKDGWEVHYIGDKNGIEHIEIEKSGLDVTFHAIATGKLRRYFSWQNLADVFKVALGLLQSLFIVAKLRPQALFSKGGFVSVPPVVAAKLLGKPVFIHESDRSMGLANKIAYKFATTMYTTFEQEDQLSKVKHLGAVTKVFKDANQMPESTQLEAVKEYFSRDLKTLLFIGGSAGAHVFNQFISDHPELKQRYNIINITGDPHLNELSSHLYRVDYVTDLYQPLIAMADLVVTRGGSNTLFELLAMAKLHLIVPLGKEASRGDQLENATYFEKRGYAKQLQEPDLTLHNFDQAMADLFEHQADYEATMLATKEIQSPDFFYDLLRADISSAIKEK</sequence>